<proteinExistence type="evidence at protein level"/>
<keyword id="KW-0002">3D-structure</keyword>
<keyword id="KW-0119">Carbohydrate metabolism</keyword>
<keyword id="KW-0136">Cellulose degradation</keyword>
<keyword id="KW-0326">Glycosidase</keyword>
<keyword id="KW-0378">Hydrolase</keyword>
<keyword id="KW-0624">Polysaccharide degradation</keyword>
<keyword id="KW-1185">Reference proteome</keyword>
<keyword id="KW-0732">Signal</keyword>
<dbReference type="EC" id="3.2.1.4"/>
<dbReference type="EMBL" id="M87018">
    <property type="protein sequence ID" value="AAA73868.1"/>
    <property type="molecule type" value="Genomic_DNA"/>
</dbReference>
<dbReference type="EMBL" id="CP001348">
    <property type="protein sequence ID" value="ACL75110.1"/>
    <property type="molecule type" value="Genomic_DNA"/>
</dbReference>
<dbReference type="PIR" id="JC1300">
    <property type="entry name" value="JC1300"/>
</dbReference>
<dbReference type="RefSeq" id="WP_015924277.1">
    <property type="nucleotide sequence ID" value="NC_011898.1"/>
</dbReference>
<dbReference type="PDB" id="1G87">
    <property type="method" value="X-ray"/>
    <property type="resolution" value="1.60 A"/>
    <property type="chains" value="A/B=36-649"/>
</dbReference>
<dbReference type="PDB" id="1GA2">
    <property type="method" value="X-ray"/>
    <property type="resolution" value="1.70 A"/>
    <property type="chains" value="A/B=36-649"/>
</dbReference>
<dbReference type="PDB" id="1K72">
    <property type="method" value="X-ray"/>
    <property type="resolution" value="1.80 A"/>
    <property type="chains" value="A/B=36-649"/>
</dbReference>
<dbReference type="PDB" id="1KFG">
    <property type="method" value="X-ray"/>
    <property type="resolution" value="1.90 A"/>
    <property type="chains" value="A/B=36-649"/>
</dbReference>
<dbReference type="PDBsum" id="1G87"/>
<dbReference type="PDBsum" id="1GA2"/>
<dbReference type="PDBsum" id="1K72"/>
<dbReference type="PDBsum" id="1KFG"/>
<dbReference type="SMR" id="P37700"/>
<dbReference type="STRING" id="394503.Ccel_0731"/>
<dbReference type="DrugBank" id="DB03859">
    <property type="generic name" value="1-thio-beta-D-glucopyranose"/>
</dbReference>
<dbReference type="DrugBank" id="DB03584">
    <property type="generic name" value="4-Thio-beta-D-glucopyranose"/>
</dbReference>
<dbReference type="DrugBank" id="DB02379">
    <property type="generic name" value="Beta-D-Glucose"/>
</dbReference>
<dbReference type="DrugBank" id="DB02061">
    <property type="generic name" value="Cellobiose"/>
</dbReference>
<dbReference type="DrugBank" id="DB02361">
    <property type="generic name" value="S-Methyl Thiocysteine Group"/>
</dbReference>
<dbReference type="CAZy" id="CBM3">
    <property type="family name" value="Carbohydrate-Binding Module Family 3"/>
</dbReference>
<dbReference type="CAZy" id="GH9">
    <property type="family name" value="Glycoside Hydrolase Family 9"/>
</dbReference>
<dbReference type="KEGG" id="cce:Ccel_0731"/>
<dbReference type="eggNOG" id="COG4733">
    <property type="taxonomic scope" value="Bacteria"/>
</dbReference>
<dbReference type="HOGENOM" id="CLU_008926_0_2_9"/>
<dbReference type="OrthoDB" id="9758662at2"/>
<dbReference type="UniPathway" id="UPA00696"/>
<dbReference type="EvolutionaryTrace" id="P37700"/>
<dbReference type="Proteomes" id="UP000001349">
    <property type="component" value="Chromosome"/>
</dbReference>
<dbReference type="GO" id="GO:0008810">
    <property type="term" value="F:cellulase activity"/>
    <property type="evidence" value="ECO:0007669"/>
    <property type="project" value="UniProtKB-EC"/>
</dbReference>
<dbReference type="GO" id="GO:0030248">
    <property type="term" value="F:cellulose binding"/>
    <property type="evidence" value="ECO:0007669"/>
    <property type="project" value="InterPro"/>
</dbReference>
<dbReference type="GO" id="GO:0030245">
    <property type="term" value="P:cellulose catabolic process"/>
    <property type="evidence" value="ECO:0007669"/>
    <property type="project" value="UniProtKB-UniPathway"/>
</dbReference>
<dbReference type="CDD" id="cd14256">
    <property type="entry name" value="Dockerin_I"/>
    <property type="match status" value="1"/>
</dbReference>
<dbReference type="FunFam" id="1.50.10.10:FF:000020">
    <property type="entry name" value="Endoglucanase"/>
    <property type="match status" value="1"/>
</dbReference>
<dbReference type="Gene3D" id="1.50.10.10">
    <property type="match status" value="1"/>
</dbReference>
<dbReference type="Gene3D" id="1.10.1330.10">
    <property type="entry name" value="Dockerin domain"/>
    <property type="match status" value="1"/>
</dbReference>
<dbReference type="Gene3D" id="2.60.40.710">
    <property type="entry name" value="Endoglucanase-like"/>
    <property type="match status" value="1"/>
</dbReference>
<dbReference type="InterPro" id="IPR008928">
    <property type="entry name" value="6-hairpin_glycosidase_sf"/>
</dbReference>
<dbReference type="InterPro" id="IPR012341">
    <property type="entry name" value="6hp_glycosidase-like_sf"/>
</dbReference>
<dbReference type="InterPro" id="IPR008965">
    <property type="entry name" value="CBM2/CBM3_carb-bd_dom_sf"/>
</dbReference>
<dbReference type="InterPro" id="IPR001956">
    <property type="entry name" value="CBM3"/>
</dbReference>
<dbReference type="InterPro" id="IPR036966">
    <property type="entry name" value="CBM3_sf"/>
</dbReference>
<dbReference type="InterPro" id="IPR002105">
    <property type="entry name" value="Dockerin_1_rpt"/>
</dbReference>
<dbReference type="InterPro" id="IPR016134">
    <property type="entry name" value="Dockerin_dom"/>
</dbReference>
<dbReference type="InterPro" id="IPR036439">
    <property type="entry name" value="Dockerin_dom_sf"/>
</dbReference>
<dbReference type="InterPro" id="IPR001701">
    <property type="entry name" value="Glyco_hydro_9"/>
</dbReference>
<dbReference type="InterPro" id="IPR033126">
    <property type="entry name" value="Glyco_hydro_9_Asp/Glu_AS"/>
</dbReference>
<dbReference type="InterPro" id="IPR018221">
    <property type="entry name" value="Glyco_hydro_9_His_AS"/>
</dbReference>
<dbReference type="PANTHER" id="PTHR22298">
    <property type="entry name" value="ENDO-1,4-BETA-GLUCANASE"/>
    <property type="match status" value="1"/>
</dbReference>
<dbReference type="Pfam" id="PF00942">
    <property type="entry name" value="CBM_3"/>
    <property type="match status" value="1"/>
</dbReference>
<dbReference type="Pfam" id="PF00404">
    <property type="entry name" value="Dockerin_1"/>
    <property type="match status" value="1"/>
</dbReference>
<dbReference type="Pfam" id="PF00759">
    <property type="entry name" value="Glyco_hydro_9"/>
    <property type="match status" value="1"/>
</dbReference>
<dbReference type="SMART" id="SM01067">
    <property type="entry name" value="CBM_3"/>
    <property type="match status" value="1"/>
</dbReference>
<dbReference type="SUPFAM" id="SSF49384">
    <property type="entry name" value="Carbohydrate-binding domain"/>
    <property type="match status" value="1"/>
</dbReference>
<dbReference type="SUPFAM" id="SSF48208">
    <property type="entry name" value="Six-hairpin glycosidases"/>
    <property type="match status" value="1"/>
</dbReference>
<dbReference type="SUPFAM" id="SSF63446">
    <property type="entry name" value="Type I dockerin domain"/>
    <property type="match status" value="1"/>
</dbReference>
<dbReference type="PROSITE" id="PS51172">
    <property type="entry name" value="CBM3"/>
    <property type="match status" value="1"/>
</dbReference>
<dbReference type="PROSITE" id="PS00448">
    <property type="entry name" value="CLOS_CELLULOSOME_RPT"/>
    <property type="match status" value="1"/>
</dbReference>
<dbReference type="PROSITE" id="PS51766">
    <property type="entry name" value="DOCKERIN"/>
    <property type="match status" value="1"/>
</dbReference>
<dbReference type="PROSITE" id="PS00018">
    <property type="entry name" value="EF_HAND_1"/>
    <property type="match status" value="1"/>
</dbReference>
<dbReference type="PROSITE" id="PS60032">
    <property type="entry name" value="GH9_1"/>
    <property type="match status" value="1"/>
</dbReference>
<dbReference type="PROSITE" id="PS00592">
    <property type="entry name" value="GH9_2"/>
    <property type="match status" value="1"/>
</dbReference>
<dbReference type="PROSITE" id="PS00698">
    <property type="entry name" value="GH9_3"/>
    <property type="match status" value="1"/>
</dbReference>
<accession>P37700</accession>
<accession>B8I7V3</accession>
<evidence type="ECO:0000255" key="1"/>
<evidence type="ECO:0000255" key="2">
    <source>
        <dbReference type="PROSITE-ProRule" id="PRU00513"/>
    </source>
</evidence>
<evidence type="ECO:0000255" key="3">
    <source>
        <dbReference type="PROSITE-ProRule" id="PRU01102"/>
    </source>
</evidence>
<evidence type="ECO:0000255" key="4">
    <source>
        <dbReference type="PROSITE-ProRule" id="PRU10059"/>
    </source>
</evidence>
<evidence type="ECO:0000255" key="5">
    <source>
        <dbReference type="PROSITE-ProRule" id="PRU10060"/>
    </source>
</evidence>
<evidence type="ECO:0000255" key="6">
    <source>
        <dbReference type="PROSITE-ProRule" id="PRU10140"/>
    </source>
</evidence>
<evidence type="ECO:0000305" key="7"/>
<evidence type="ECO:0007829" key="8">
    <source>
        <dbReference type="PDB" id="1G87"/>
    </source>
</evidence>
<protein>
    <recommendedName>
        <fullName>Endoglucanase G</fullName>
        <ecNumber>3.2.1.4</ecNumber>
    </recommendedName>
    <alternativeName>
        <fullName>Cellulase G</fullName>
    </alternativeName>
    <alternativeName>
        <fullName>EGCCG</fullName>
    </alternativeName>
    <alternativeName>
        <fullName>Endo-1,4-beta-glucanase G</fullName>
    </alternativeName>
</protein>
<comment type="function">
    <text>The biological conversion of cellulose to glucose generally requires three types of hydrolytic enzymes: (1) Endoglucanases which cut internal beta-1,4-glucosidic bonds; (2) Exocellobiohydrolases that cut the disaccharide cellobiose from the non-reducing end of the cellulose polymer chain; (3) Beta-1,4-glucosidases which hydrolyze the cellobiose and other short cello-oligosaccharides to glucose.</text>
</comment>
<comment type="catalytic activity">
    <reaction>
        <text>Endohydrolysis of (1-&gt;4)-beta-D-glucosidic linkages in cellulose, lichenin and cereal beta-D-glucans.</text>
        <dbReference type="EC" id="3.2.1.4"/>
    </reaction>
</comment>
<comment type="pathway">
    <text>Glycan metabolism; cellulose degradation.</text>
</comment>
<comment type="similarity">
    <text evidence="6 7">Belongs to the glycosyl hydrolase 9 (cellulase E) family.</text>
</comment>
<sequence>MLKTKRKLTKAIGVALSISILSSLVSFIPQTNTYAAGTYNYGEALQKSIMFYEFQRSGDLPADKRDNWRDDSGMKDGSDVGVDLTGGWYDAGDHVKFNLPMSYTSAMLAWSLYEDKDAYDKSGQTKYIMDGIKWANDYFIKCNPTPGVYYYQVGDGGKDHSWWGPAEVMQMERPSFKVDASKPGSAVCASTAASLASAAVVFKSSDPTYAEKCISHAKNLFDMADKAKSDAGYTAASGYYSSSSFYDDLSWAAVWLYLATNDSTYLDKAESYVPNWGKEQQTDIIAYKWGQCWDDVHYGAELLLAKLTNKQLYKDSIEMNLDFWTTGVNGTRVSYTPKGLAWLFQWGSLRHATTQAFLAGVYAEWEGCTPSKVSVYKDFLKSQIDYALGSTGRSFVVGYGVNPPQHPHHRTAHGSWTDQMTSPTYHRHTIYGALVGGPDNADGYTDEINNYVNNEIACDYNAGFTGALAKMYKHSGGDPIPNFKAIEKITNDEVIIKAGLNSTGPNYTEIKAVVYNQTGWPARVTDKISFKYFMDLSEIVAAGIDPLSLVTSSNYSEGKNTKVSGVLPWDVSNNVYYVNVDLTGENIYPGGQSACRREVQFRIAAPQGTTYWNPKNDFSYDGLPTTSTVNTVTNIPVYDNGVKVFGNEPAGGSENPDPEILYGDVNSDKNVDALDFAALKKYLLGGTSSIDVKAADTYKDGNIDAIDMATLKKYLLGTITQLPQG</sequence>
<feature type="signal peptide" evidence="1">
    <location>
        <begin position="1"/>
        <end position="35"/>
    </location>
</feature>
<feature type="chain" id="PRO_0000007947" description="Endoglucanase G">
    <location>
        <begin position="36"/>
        <end position="725"/>
    </location>
</feature>
<feature type="domain" description="CBM3" evidence="2">
    <location>
        <begin position="489"/>
        <end position="650"/>
    </location>
</feature>
<feature type="domain" description="Dockerin" evidence="3">
    <location>
        <begin position="658"/>
        <end position="724"/>
    </location>
</feature>
<feature type="active site" description="Nucleophile" evidence="6">
    <location>
        <position position="93"/>
    </location>
</feature>
<feature type="active site" evidence="4">
    <location>
        <position position="408"/>
    </location>
</feature>
<feature type="active site" evidence="5">
    <location>
        <position position="446"/>
    </location>
</feature>
<feature type="active site" evidence="5">
    <location>
        <position position="455"/>
    </location>
</feature>
<feature type="sequence conflict" description="In Ref. 1; AAA73868." evidence="7" ref="1">
    <original>TT</original>
    <variation>RR</variation>
    <location>
        <begin position="609"/>
        <end position="610"/>
    </location>
</feature>
<feature type="helix" evidence="8">
    <location>
        <begin position="41"/>
        <end position="55"/>
    </location>
</feature>
<feature type="strand" evidence="8">
    <location>
        <begin position="65"/>
        <end position="68"/>
    </location>
</feature>
<feature type="turn" evidence="8">
    <location>
        <begin position="74"/>
        <end position="77"/>
    </location>
</feature>
<feature type="helix" evidence="8">
    <location>
        <begin position="78"/>
        <end position="80"/>
    </location>
</feature>
<feature type="strand" evidence="8">
    <location>
        <begin position="91"/>
        <end position="93"/>
    </location>
</feature>
<feature type="helix" evidence="8">
    <location>
        <begin position="98"/>
        <end position="122"/>
    </location>
</feature>
<feature type="helix" evidence="8">
    <location>
        <begin position="125"/>
        <end position="141"/>
    </location>
</feature>
<feature type="strand" evidence="8">
    <location>
        <begin position="149"/>
        <end position="154"/>
    </location>
</feature>
<feature type="helix" evidence="8">
    <location>
        <begin position="156"/>
        <end position="160"/>
    </location>
</feature>
<feature type="helix" evidence="8">
    <location>
        <begin position="166"/>
        <end position="168"/>
    </location>
</feature>
<feature type="strand" evidence="8">
    <location>
        <begin position="175"/>
        <end position="178"/>
    </location>
</feature>
<feature type="strand" evidence="8">
    <location>
        <begin position="180"/>
        <end position="182"/>
    </location>
</feature>
<feature type="helix" evidence="8">
    <location>
        <begin position="185"/>
        <end position="202"/>
    </location>
</feature>
<feature type="turn" evidence="8">
    <location>
        <begin position="203"/>
        <end position="205"/>
    </location>
</feature>
<feature type="helix" evidence="8">
    <location>
        <begin position="207"/>
        <end position="227"/>
    </location>
</feature>
<feature type="turn" evidence="8">
    <location>
        <begin position="235"/>
        <end position="239"/>
    </location>
</feature>
<feature type="helix" evidence="8">
    <location>
        <begin position="246"/>
        <end position="260"/>
    </location>
</feature>
<feature type="helix" evidence="8">
    <location>
        <begin position="263"/>
        <end position="271"/>
    </location>
</feature>
<feature type="helix" evidence="8">
    <location>
        <begin position="272"/>
        <end position="275"/>
    </location>
</feature>
<feature type="strand" evidence="8">
    <location>
        <begin position="282"/>
        <end position="285"/>
    </location>
</feature>
<feature type="helix" evidence="8">
    <location>
        <begin position="297"/>
        <end position="308"/>
    </location>
</feature>
<feature type="helix" evidence="8">
    <location>
        <begin position="311"/>
        <end position="324"/>
    </location>
</feature>
<feature type="strand" evidence="8">
    <location>
        <begin position="345"/>
        <end position="347"/>
    </location>
</feature>
<feature type="helix" evidence="8">
    <location>
        <begin position="348"/>
        <end position="364"/>
    </location>
</feature>
<feature type="helix" evidence="8">
    <location>
        <begin position="370"/>
        <end position="372"/>
    </location>
</feature>
<feature type="helix" evidence="8">
    <location>
        <begin position="373"/>
        <end position="388"/>
    </location>
</feature>
<feature type="turn" evidence="8">
    <location>
        <begin position="389"/>
        <end position="391"/>
    </location>
</feature>
<feature type="strand" evidence="8">
    <location>
        <begin position="399"/>
        <end position="402"/>
    </location>
</feature>
<feature type="helix" evidence="8">
    <location>
        <begin position="410"/>
        <end position="413"/>
    </location>
</feature>
<feature type="strand" evidence="8">
    <location>
        <begin position="416"/>
        <end position="418"/>
    </location>
</feature>
<feature type="strand" evidence="8">
    <location>
        <begin position="422"/>
        <end position="425"/>
    </location>
</feature>
<feature type="helix" evidence="8">
    <location>
        <begin position="451"/>
        <end position="454"/>
    </location>
</feature>
<feature type="helix" evidence="8">
    <location>
        <begin position="458"/>
        <end position="475"/>
    </location>
</feature>
<feature type="strand" evidence="8">
    <location>
        <begin position="493"/>
        <end position="504"/>
    </location>
</feature>
<feature type="strand" evidence="8">
    <location>
        <begin position="507"/>
        <end position="516"/>
    </location>
</feature>
<feature type="strand" evidence="8">
    <location>
        <begin position="527"/>
        <end position="535"/>
    </location>
</feature>
<feature type="helix" evidence="8">
    <location>
        <begin position="537"/>
        <end position="541"/>
    </location>
</feature>
<feature type="helix" evidence="8">
    <location>
        <begin position="546"/>
        <end position="548"/>
    </location>
</feature>
<feature type="strand" evidence="8">
    <location>
        <begin position="549"/>
        <end position="552"/>
    </location>
</feature>
<feature type="strand" evidence="8">
    <location>
        <begin position="556"/>
        <end position="558"/>
    </location>
</feature>
<feature type="strand" evidence="8">
    <location>
        <begin position="567"/>
        <end position="570"/>
    </location>
</feature>
<feature type="helix" evidence="8">
    <location>
        <begin position="571"/>
        <end position="573"/>
    </location>
</feature>
<feature type="strand" evidence="8">
    <location>
        <begin position="575"/>
        <end position="581"/>
    </location>
</feature>
<feature type="strand" evidence="8">
    <location>
        <begin position="589"/>
        <end position="591"/>
    </location>
</feature>
<feature type="turn" evidence="8">
    <location>
        <begin position="592"/>
        <end position="595"/>
    </location>
</feature>
<feature type="strand" evidence="8">
    <location>
        <begin position="596"/>
        <end position="604"/>
    </location>
</feature>
<feature type="helix" evidence="8">
    <location>
        <begin position="614"/>
        <end position="616"/>
    </location>
</feature>
<feature type="helix" evidence="8">
    <location>
        <begin position="618"/>
        <end position="620"/>
    </location>
</feature>
<feature type="strand" evidence="8">
    <location>
        <begin position="625"/>
        <end position="628"/>
    </location>
</feature>
<feature type="strand" evidence="8">
    <location>
        <begin position="633"/>
        <end position="635"/>
    </location>
</feature>
<feature type="strand" evidence="8">
    <location>
        <begin position="637"/>
        <end position="639"/>
    </location>
</feature>
<feature type="strand" evidence="8">
    <location>
        <begin position="642"/>
        <end position="646"/>
    </location>
</feature>
<name>GUNG_RUMCH</name>
<organism>
    <name type="scientific">Ruminiclostridium cellulolyticum (strain ATCC 35319 / DSM 5812 / JCM 6584 / H10)</name>
    <name type="common">Clostridium cellulolyticum</name>
    <dbReference type="NCBI Taxonomy" id="394503"/>
    <lineage>
        <taxon>Bacteria</taxon>
        <taxon>Bacillati</taxon>
        <taxon>Bacillota</taxon>
        <taxon>Clostridia</taxon>
        <taxon>Eubacteriales</taxon>
        <taxon>Oscillospiraceae</taxon>
        <taxon>Ruminiclostridium</taxon>
    </lineage>
</organism>
<reference key="1">
    <citation type="journal article" date="1992" name="Gene">
        <title>Sequence analysis of a gene cluster encoding cellulases from Clostridium cellulolyticum.</title>
        <authorList>
            <person name="Bagnara-Tardif C."/>
            <person name="Gaudin C."/>
            <person name="Belaich A."/>
            <person name="Hoest P."/>
            <person name="Citard T."/>
            <person name="Belaich J.-P."/>
        </authorList>
    </citation>
    <scope>NUCLEOTIDE SEQUENCE [GENOMIC DNA]</scope>
</reference>
<reference key="2">
    <citation type="submission" date="2009-01" db="EMBL/GenBank/DDBJ databases">
        <title>Complete sequence of Clostridium cellulolyticum H10.</title>
        <authorList>
            <consortium name="US DOE Joint Genome Institute"/>
            <person name="Lucas S."/>
            <person name="Copeland A."/>
            <person name="Lapidus A."/>
            <person name="Glavina del Rio T."/>
            <person name="Dalin E."/>
            <person name="Tice H."/>
            <person name="Bruce D."/>
            <person name="Goodwin L."/>
            <person name="Pitluck S."/>
            <person name="Chertkov O."/>
            <person name="Saunders E."/>
            <person name="Brettin T."/>
            <person name="Detter J.C."/>
            <person name="Han C."/>
            <person name="Larimer F."/>
            <person name="Land M."/>
            <person name="Hauser L."/>
            <person name="Kyrpides N."/>
            <person name="Ivanova N."/>
            <person name="Zhou J."/>
            <person name="Richardson P."/>
        </authorList>
    </citation>
    <scope>NUCLEOTIDE SEQUENCE [LARGE SCALE GENOMIC DNA]</scope>
    <source>
        <strain>ATCC 35319 / DSM 5812 / JCM 6584 / H10</strain>
    </source>
</reference>
<gene>
    <name type="primary">celCCG</name>
    <name type="ordered locus">Ccel_0731</name>
</gene>